<keyword id="KW-0255">Endonuclease</keyword>
<keyword id="KW-0378">Hydrolase</keyword>
<keyword id="KW-0540">Nuclease</keyword>
<keyword id="KW-1185">Reference proteome</keyword>
<keyword id="KW-0694">RNA-binding</keyword>
<keyword id="KW-0819">tRNA processing</keyword>
<organism>
    <name type="scientific">Azoarcus sp. (strain BH72)</name>
    <dbReference type="NCBI Taxonomy" id="418699"/>
    <lineage>
        <taxon>Bacteria</taxon>
        <taxon>Pseudomonadati</taxon>
        <taxon>Pseudomonadota</taxon>
        <taxon>Betaproteobacteria</taxon>
        <taxon>Rhodocyclales</taxon>
        <taxon>Zoogloeaceae</taxon>
        <taxon>Azoarcus</taxon>
    </lineage>
</organism>
<evidence type="ECO:0000255" key="1">
    <source>
        <dbReference type="HAMAP-Rule" id="MF_00227"/>
    </source>
</evidence>
<comment type="function">
    <text evidence="1">RNaseP catalyzes the removal of the 5'-leader sequence from pre-tRNA to produce the mature 5'-terminus. It can also cleave other RNA substrates such as 4.5S RNA. The protein component plays an auxiliary but essential role in vivo by binding to the 5'-leader sequence and broadening the substrate specificity of the ribozyme.</text>
</comment>
<comment type="catalytic activity">
    <reaction evidence="1">
        <text>Endonucleolytic cleavage of RNA, removing 5'-extranucleotides from tRNA precursor.</text>
        <dbReference type="EC" id="3.1.26.5"/>
    </reaction>
</comment>
<comment type="subunit">
    <text evidence="1">Consists of a catalytic RNA component (M1 or rnpB) and a protein subunit.</text>
</comment>
<comment type="similarity">
    <text evidence="1">Belongs to the RnpA family.</text>
</comment>
<sequence length="120" mass="13798">MTDPAGADERFLGAHRLHKTDEFSSVFAFRRALRGRYFMLHYRPNALTTARLGVVVAKKLAKRANVRNLVKRIARERFRRQRTVLPAHDLIVRLHAPVTEASRAALNQDLLQLFGRLPQT</sequence>
<reference key="1">
    <citation type="journal article" date="2006" name="Nat. Biotechnol.">
        <title>Complete genome of the mutualistic, N2-fixing grass endophyte Azoarcus sp. strain BH72.</title>
        <authorList>
            <person name="Krause A."/>
            <person name="Ramakumar A."/>
            <person name="Bartels D."/>
            <person name="Battistoni F."/>
            <person name="Bekel T."/>
            <person name="Boch J."/>
            <person name="Boehm M."/>
            <person name="Friedrich F."/>
            <person name="Hurek T."/>
            <person name="Krause L."/>
            <person name="Linke B."/>
            <person name="McHardy A.C."/>
            <person name="Sarkar A."/>
            <person name="Schneiker S."/>
            <person name="Syed A.A."/>
            <person name="Thauer R."/>
            <person name="Vorhoelter F.-J."/>
            <person name="Weidner S."/>
            <person name="Puehler A."/>
            <person name="Reinhold-Hurek B."/>
            <person name="Kaiser O."/>
            <person name="Goesmann A."/>
        </authorList>
    </citation>
    <scope>NUCLEOTIDE SEQUENCE [LARGE SCALE GENOMIC DNA]</scope>
    <source>
        <strain>BH72</strain>
    </source>
</reference>
<gene>
    <name evidence="1" type="primary">rnpA</name>
    <name type="ordered locus">azo3991</name>
</gene>
<proteinExistence type="inferred from homology"/>
<name>RNPA_AZOSB</name>
<accession>A1KCQ1</accession>
<protein>
    <recommendedName>
        <fullName evidence="1">Ribonuclease P protein component</fullName>
        <shortName evidence="1">RNase P protein</shortName>
        <shortName evidence="1">RNaseP protein</shortName>
        <ecNumber evidence="1">3.1.26.5</ecNumber>
    </recommendedName>
    <alternativeName>
        <fullName evidence="1">Protein C5</fullName>
    </alternativeName>
</protein>
<dbReference type="EC" id="3.1.26.5" evidence="1"/>
<dbReference type="EMBL" id="AM406670">
    <property type="protein sequence ID" value="CAL96607.1"/>
    <property type="molecule type" value="Genomic_DNA"/>
</dbReference>
<dbReference type="SMR" id="A1KCQ1"/>
<dbReference type="STRING" id="62928.azo3991"/>
<dbReference type="KEGG" id="azo:azo3991"/>
<dbReference type="eggNOG" id="COG0594">
    <property type="taxonomic scope" value="Bacteria"/>
</dbReference>
<dbReference type="HOGENOM" id="CLU_117179_11_2_4"/>
<dbReference type="Proteomes" id="UP000002588">
    <property type="component" value="Chromosome"/>
</dbReference>
<dbReference type="GO" id="GO:0030677">
    <property type="term" value="C:ribonuclease P complex"/>
    <property type="evidence" value="ECO:0007669"/>
    <property type="project" value="TreeGrafter"/>
</dbReference>
<dbReference type="GO" id="GO:0042781">
    <property type="term" value="F:3'-tRNA processing endoribonuclease activity"/>
    <property type="evidence" value="ECO:0007669"/>
    <property type="project" value="TreeGrafter"/>
</dbReference>
<dbReference type="GO" id="GO:0004526">
    <property type="term" value="F:ribonuclease P activity"/>
    <property type="evidence" value="ECO:0007669"/>
    <property type="project" value="UniProtKB-UniRule"/>
</dbReference>
<dbReference type="GO" id="GO:0000049">
    <property type="term" value="F:tRNA binding"/>
    <property type="evidence" value="ECO:0007669"/>
    <property type="project" value="UniProtKB-UniRule"/>
</dbReference>
<dbReference type="GO" id="GO:0001682">
    <property type="term" value="P:tRNA 5'-leader removal"/>
    <property type="evidence" value="ECO:0007669"/>
    <property type="project" value="UniProtKB-UniRule"/>
</dbReference>
<dbReference type="Gene3D" id="3.30.230.10">
    <property type="match status" value="1"/>
</dbReference>
<dbReference type="HAMAP" id="MF_00227">
    <property type="entry name" value="RNase_P"/>
    <property type="match status" value="1"/>
</dbReference>
<dbReference type="InterPro" id="IPR020568">
    <property type="entry name" value="Ribosomal_Su5_D2-typ_SF"/>
</dbReference>
<dbReference type="InterPro" id="IPR014721">
    <property type="entry name" value="Ribsml_uS5_D2-typ_fold_subgr"/>
</dbReference>
<dbReference type="InterPro" id="IPR000100">
    <property type="entry name" value="RNase_P"/>
</dbReference>
<dbReference type="InterPro" id="IPR020539">
    <property type="entry name" value="RNase_P_CS"/>
</dbReference>
<dbReference type="NCBIfam" id="TIGR00188">
    <property type="entry name" value="rnpA"/>
    <property type="match status" value="1"/>
</dbReference>
<dbReference type="PANTHER" id="PTHR33992">
    <property type="entry name" value="RIBONUCLEASE P PROTEIN COMPONENT"/>
    <property type="match status" value="1"/>
</dbReference>
<dbReference type="PANTHER" id="PTHR33992:SF1">
    <property type="entry name" value="RIBONUCLEASE P PROTEIN COMPONENT"/>
    <property type="match status" value="1"/>
</dbReference>
<dbReference type="Pfam" id="PF00825">
    <property type="entry name" value="Ribonuclease_P"/>
    <property type="match status" value="1"/>
</dbReference>
<dbReference type="SUPFAM" id="SSF54211">
    <property type="entry name" value="Ribosomal protein S5 domain 2-like"/>
    <property type="match status" value="1"/>
</dbReference>
<dbReference type="PROSITE" id="PS00648">
    <property type="entry name" value="RIBONUCLEASE_P"/>
    <property type="match status" value="1"/>
</dbReference>
<feature type="chain" id="PRO_1000021374" description="Ribonuclease P protein component">
    <location>
        <begin position="1"/>
        <end position="120"/>
    </location>
</feature>